<comment type="function">
    <text evidence="2">Catalyzes the cleavage of L-arabino-gamma-lactone to L-arabonate. Is involved in a degradation pathway of L-arabinose that allows A.brasilense to grow on L-arabinose as a sole carbon source. Can also use D-galactono-1,4-lactone as substrate in vitro; however, the enzyme is probably not involved in the metabolism of D-galactose in vivo.</text>
</comment>
<comment type="catalytic activity">
    <reaction evidence="2">
        <text>L-arabinono-1,4-lactone + H2O = L-arabinonate + H(+)</text>
        <dbReference type="Rhea" id="RHEA:16217"/>
        <dbReference type="ChEBI" id="CHEBI:15377"/>
        <dbReference type="ChEBI" id="CHEBI:15378"/>
        <dbReference type="ChEBI" id="CHEBI:16501"/>
        <dbReference type="ChEBI" id="CHEBI:17100"/>
        <dbReference type="EC" id="3.1.1.15"/>
    </reaction>
</comment>
<comment type="cofactor">
    <cofactor evidence="1">
        <name>a divalent metal cation</name>
        <dbReference type="ChEBI" id="CHEBI:60240"/>
    </cofactor>
    <text evidence="1">Binds 1 divalent metal cation per subunit.</text>
</comment>
<comment type="similarity">
    <text evidence="3">Belongs to the SMP-30/CGR1 family.</text>
</comment>
<gene>
    <name type="primary">araB</name>
</gene>
<accession>Q1JUP5</accession>
<name>ARALA_AZOBR</name>
<proteinExistence type="evidence at protein level"/>
<reference key="1">
    <citation type="journal article" date="2006" name="J. Biol. Chem.">
        <title>Identification and characterization of L-arabonate dehydratase, L-2-keto-3-deoxyarabonate dehydratase and L-arabinolactonase involved in an alternative pathway of L-arabinose metabolism: novel evolutionary insight into sugar metabolism.</title>
        <authorList>
            <person name="Watanabe S."/>
            <person name="Shimada N."/>
            <person name="Tajima K."/>
            <person name="Kodaki T."/>
            <person name="Makino K."/>
        </authorList>
    </citation>
    <scope>NUCLEOTIDE SEQUENCE [GENOMIC DNA]</scope>
    <scope>FUNCTION</scope>
    <scope>CATALYTIC ACTIVITY</scope>
    <scope>SUBSTRATE SPECIFICITY</scope>
    <scope>PATHWAY</scope>
    <source>
        <strain>ATCC 29145 / DSM 1690 / IMET 11303 / Sp7</strain>
    </source>
</reference>
<reference key="2">
    <citation type="journal article" date="1982" name="J. Bacteriol.">
        <title>L-arabinose metabolism in Azospirillum brasiliense.</title>
        <authorList>
            <person name="Novick N.J."/>
            <person name="Tyler M.E."/>
        </authorList>
    </citation>
    <scope>PATHWAY</scope>
    <source>
        <strain>ATCC 29145 / DSM 1690 / IMET 11303 / Sp7</strain>
    </source>
</reference>
<organism>
    <name type="scientific">Azospirillum brasilense</name>
    <dbReference type="NCBI Taxonomy" id="192"/>
    <lineage>
        <taxon>Bacteria</taxon>
        <taxon>Pseudomonadati</taxon>
        <taxon>Pseudomonadota</taxon>
        <taxon>Alphaproteobacteria</taxon>
        <taxon>Rhodospirillales</taxon>
        <taxon>Azospirillaceae</taxon>
        <taxon>Azospirillum</taxon>
    </lineage>
</organism>
<dbReference type="EC" id="3.1.1.15"/>
<dbReference type="EMBL" id="AB241136">
    <property type="protein sequence ID" value="BAE94275.1"/>
    <property type="molecule type" value="Genomic_DNA"/>
</dbReference>
<dbReference type="SMR" id="Q1JUP5"/>
<dbReference type="GO" id="GO:0005509">
    <property type="term" value="F:calcium ion binding"/>
    <property type="evidence" value="ECO:0007669"/>
    <property type="project" value="TreeGrafter"/>
</dbReference>
<dbReference type="GO" id="GO:0004341">
    <property type="term" value="F:gluconolactonase activity"/>
    <property type="evidence" value="ECO:0007669"/>
    <property type="project" value="TreeGrafter"/>
</dbReference>
<dbReference type="GO" id="GO:0050021">
    <property type="term" value="F:L-arabinonolactonase activity"/>
    <property type="evidence" value="ECO:0000314"/>
    <property type="project" value="UniProtKB"/>
</dbReference>
<dbReference type="GO" id="GO:0019570">
    <property type="term" value="P:L-arabinose catabolic process to 2-oxoglutarate"/>
    <property type="evidence" value="ECO:0000314"/>
    <property type="project" value="UniProtKB"/>
</dbReference>
<dbReference type="GO" id="GO:0019853">
    <property type="term" value="P:L-ascorbic acid biosynthetic process"/>
    <property type="evidence" value="ECO:0007669"/>
    <property type="project" value="TreeGrafter"/>
</dbReference>
<dbReference type="Gene3D" id="2.120.10.30">
    <property type="entry name" value="TolB, C-terminal domain"/>
    <property type="match status" value="1"/>
</dbReference>
<dbReference type="InterPro" id="IPR011042">
    <property type="entry name" value="6-blade_b-propeller_TolB-like"/>
</dbReference>
<dbReference type="InterPro" id="IPR013658">
    <property type="entry name" value="SGL"/>
</dbReference>
<dbReference type="InterPro" id="IPR005511">
    <property type="entry name" value="SMP-30"/>
</dbReference>
<dbReference type="PANTHER" id="PTHR10907">
    <property type="entry name" value="REGUCALCIN"/>
    <property type="match status" value="1"/>
</dbReference>
<dbReference type="PANTHER" id="PTHR10907:SF47">
    <property type="entry name" value="REGUCALCIN"/>
    <property type="match status" value="1"/>
</dbReference>
<dbReference type="Pfam" id="PF08450">
    <property type="entry name" value="SGL"/>
    <property type="match status" value="1"/>
</dbReference>
<dbReference type="PRINTS" id="PR01790">
    <property type="entry name" value="SMP30FAMILY"/>
</dbReference>
<dbReference type="SUPFAM" id="SSF63829">
    <property type="entry name" value="Calcium-dependent phosphotriesterase"/>
    <property type="match status" value="1"/>
</dbReference>
<evidence type="ECO:0000250" key="1"/>
<evidence type="ECO:0000269" key="2">
    <source>
    </source>
</evidence>
<evidence type="ECO:0000305" key="3"/>
<feature type="chain" id="PRO_0000418505" description="L-arabinolactonase">
    <location>
        <begin position="1"/>
        <end position="300"/>
    </location>
</feature>
<feature type="binding site" evidence="1">
    <location>
        <position position="22"/>
    </location>
    <ligand>
        <name>a divalent metal cation</name>
        <dbReference type="ChEBI" id="CHEBI:60240"/>
    </ligand>
</feature>
<feature type="binding site" evidence="1">
    <location>
        <position position="156"/>
    </location>
    <ligand>
        <name>a divalent metal cation</name>
        <dbReference type="ChEBI" id="CHEBI:60240"/>
    </ligand>
</feature>
<feature type="binding site" evidence="1">
    <location>
        <position position="205"/>
    </location>
    <ligand>
        <name>a divalent metal cation</name>
        <dbReference type="ChEBI" id="CHEBI:60240"/>
    </ligand>
</feature>
<protein>
    <recommendedName>
        <fullName>L-arabinolactonase</fullName>
        <ecNumber>3.1.1.15</ecNumber>
    </recommendedName>
</protein>
<keyword id="KW-0054">Arabinose catabolism</keyword>
<keyword id="KW-0119">Carbohydrate metabolism</keyword>
<keyword id="KW-0378">Hydrolase</keyword>
<keyword id="KW-0479">Metal-binding</keyword>
<sequence>MQQIHPAGQATLLADTRNTLGEGATWCDRTRALYWVDIEGAQLWRCRADGSDLTPWPMPERLACFALTDDPDVLLVGLATHLAFFDLRSGAFTRIVEVEPELPTRLNDGRCDGSGAFVFGMKDEGAEPPRAVGGFYRLNADLTLERLALPPAAIANSIGFSPDGSKMYFCDSLVREIFVCDYRPGGEVANVRPFARLTDPDGDPDGSIVDRDGGLWNAQWGGRRVVRYGPDGVETDRVAVPTAQPSCTALDGEGRLYVTSARVGLSDDALADDPHAGGVFVAQTRHAGMATARFAGTPRG</sequence>